<sequence length="514" mass="61319">MDKLQRDGKEDTPRQRRFLYPLLFQEDLYAIAYDHYFNRSSSFEPMENSSSNDRFSFLTVKRLISRIRQQNGSIVPFVNCDQTKLVGHNRSFYSELVLGGLTAVPEVPLSIRSEHSLERMNEWTSFRSIHSILPLMEDKIPHSNFILDIRIPHLTHPEILVRTFRRWIQDAPSLHSLRSVLHEHRNLIISSNLDQLILIASKENTRLSLFLWNYYAYECESLLVPLWKRFFYSRSLPYESFIERTPFYRKIEHIVIFYHKYLKKSLWFLKDPSIHYVKHRERSIIALRGTYLLAKKWRYHITKFWQCHFHLWPQPYRIYIDELSNNCFSFLGYLLSVKMKTSVVRIKMPDDSFITDLITKEFDPIAPTTLLIGSLAKEKFCDISGHPISRLAWTGLTDDDILDRFDRIWRNIFHYHSGSSKKDGLYRMKYILRLPCAKTLACKHKSAIRVVRERFGSELFTKSSPKERESIFLSFSKTRSQRERIWHSDIIQINPLINSCRKKHNLQIEPLFDR</sequence>
<keyword id="KW-0150">Chloroplast</keyword>
<keyword id="KW-0507">mRNA processing</keyword>
<keyword id="KW-0934">Plastid</keyword>
<keyword id="KW-0694">RNA-binding</keyword>
<keyword id="KW-0819">tRNA processing</keyword>
<name>MATK_DIOSP</name>
<feature type="chain" id="PRO_0000143360" description="Maturase K">
    <location>
        <begin position="1"/>
        <end position="514"/>
    </location>
</feature>
<dbReference type="EMBL" id="AF279797">
    <property type="protein sequence ID" value="AAK69120.1"/>
    <property type="molecule type" value="Genomic_DNA"/>
</dbReference>
<dbReference type="GO" id="GO:0009507">
    <property type="term" value="C:chloroplast"/>
    <property type="evidence" value="ECO:0007669"/>
    <property type="project" value="UniProtKB-SubCell"/>
</dbReference>
<dbReference type="GO" id="GO:0003723">
    <property type="term" value="F:RNA binding"/>
    <property type="evidence" value="ECO:0007669"/>
    <property type="project" value="UniProtKB-KW"/>
</dbReference>
<dbReference type="GO" id="GO:0006397">
    <property type="term" value="P:mRNA processing"/>
    <property type="evidence" value="ECO:0007669"/>
    <property type="project" value="UniProtKB-KW"/>
</dbReference>
<dbReference type="GO" id="GO:0008380">
    <property type="term" value="P:RNA splicing"/>
    <property type="evidence" value="ECO:0007669"/>
    <property type="project" value="UniProtKB-UniRule"/>
</dbReference>
<dbReference type="GO" id="GO:0008033">
    <property type="term" value="P:tRNA processing"/>
    <property type="evidence" value="ECO:0007669"/>
    <property type="project" value="UniProtKB-KW"/>
</dbReference>
<dbReference type="HAMAP" id="MF_01390">
    <property type="entry name" value="MatK"/>
    <property type="match status" value="1"/>
</dbReference>
<dbReference type="InterPro" id="IPR024937">
    <property type="entry name" value="Domain_X"/>
</dbReference>
<dbReference type="InterPro" id="IPR002866">
    <property type="entry name" value="Maturase_MatK"/>
</dbReference>
<dbReference type="InterPro" id="IPR024942">
    <property type="entry name" value="Maturase_MatK_N"/>
</dbReference>
<dbReference type="PANTHER" id="PTHR34811">
    <property type="entry name" value="MATURASE K"/>
    <property type="match status" value="1"/>
</dbReference>
<dbReference type="PANTHER" id="PTHR34811:SF1">
    <property type="entry name" value="MATURASE K"/>
    <property type="match status" value="1"/>
</dbReference>
<dbReference type="Pfam" id="PF01348">
    <property type="entry name" value="Intron_maturas2"/>
    <property type="match status" value="1"/>
</dbReference>
<dbReference type="Pfam" id="PF01824">
    <property type="entry name" value="MatK_N"/>
    <property type="match status" value="1"/>
</dbReference>
<organism>
    <name type="scientific">Dioon spinulosum</name>
    <name type="common">Gum palm</name>
    <dbReference type="NCBI Taxonomy" id="115877"/>
    <lineage>
        <taxon>Eukaryota</taxon>
        <taxon>Viridiplantae</taxon>
        <taxon>Streptophyta</taxon>
        <taxon>Embryophyta</taxon>
        <taxon>Tracheophyta</taxon>
        <taxon>Spermatophyta</taxon>
        <taxon>Cycadidae</taxon>
        <taxon>Cycadales</taxon>
        <taxon>Zamiaceae</taxon>
        <taxon>Dioon</taxon>
    </lineage>
</organism>
<reference key="1">
    <citation type="submission" date="2000-06" db="EMBL/GenBank/DDBJ databases">
        <title>Chloroplast matK sequence data reconfirm the monophyly of extant gymnosperms and the coniferophytic origin of Gnetales.</title>
        <authorList>
            <person name="Chaw S.-M."/>
            <person name="Hu S.-H."/>
        </authorList>
    </citation>
    <scope>NUCLEOTIDE SEQUENCE [GENOMIC DNA]</scope>
</reference>
<proteinExistence type="inferred from homology"/>
<protein>
    <recommendedName>
        <fullName evidence="1">Maturase K</fullName>
    </recommendedName>
    <alternativeName>
        <fullName evidence="1">Intron maturase</fullName>
    </alternativeName>
</protein>
<geneLocation type="chloroplast"/>
<comment type="function">
    <text evidence="1">Usually encoded in the trnK tRNA gene intron. Probably assists in splicing its own and other chloroplast group II introns.</text>
</comment>
<comment type="subcellular location">
    <subcellularLocation>
        <location>Plastid</location>
        <location>Chloroplast</location>
    </subcellularLocation>
</comment>
<comment type="similarity">
    <text evidence="1">Belongs to the intron maturase 2 family. MatK subfamily.</text>
</comment>
<evidence type="ECO:0000255" key="1">
    <source>
        <dbReference type="HAMAP-Rule" id="MF_01390"/>
    </source>
</evidence>
<gene>
    <name evidence="1" type="primary">matK</name>
</gene>
<accession>Q8MEY1</accession>